<feature type="chain" id="PRO_1000195163" description="Holliday junction branch migration complex subunit RuvA">
    <location>
        <begin position="1"/>
        <end position="226"/>
    </location>
</feature>
<feature type="region of interest" description="Domain I" evidence="1">
    <location>
        <begin position="1"/>
        <end position="67"/>
    </location>
</feature>
<feature type="region of interest" description="Domain II" evidence="1">
    <location>
        <begin position="68"/>
        <end position="145"/>
    </location>
</feature>
<feature type="region of interest" description="Flexible linker" evidence="1">
    <location>
        <begin position="146"/>
        <end position="167"/>
    </location>
</feature>
<feature type="region of interest" description="Domain III" evidence="1">
    <location>
        <begin position="168"/>
        <end position="226"/>
    </location>
</feature>
<keyword id="KW-0963">Cytoplasm</keyword>
<keyword id="KW-0227">DNA damage</keyword>
<keyword id="KW-0233">DNA recombination</keyword>
<keyword id="KW-0234">DNA repair</keyword>
<keyword id="KW-0238">DNA-binding</keyword>
<keyword id="KW-1185">Reference proteome</keyword>
<organism>
    <name type="scientific">Mycoplasmoides gallisepticum (strain R(low / passage 15 / clone 2))</name>
    <name type="common">Mycoplasma gallisepticum</name>
    <dbReference type="NCBI Taxonomy" id="710127"/>
    <lineage>
        <taxon>Bacteria</taxon>
        <taxon>Bacillati</taxon>
        <taxon>Mycoplasmatota</taxon>
        <taxon>Mycoplasmoidales</taxon>
        <taxon>Mycoplasmoidaceae</taxon>
        <taxon>Mycoplasmoides</taxon>
    </lineage>
</organism>
<dbReference type="EMBL" id="AE015450">
    <property type="protein sequence ID" value="AAP56954.1"/>
    <property type="molecule type" value="Genomic_DNA"/>
</dbReference>
<dbReference type="RefSeq" id="WP_011113863.1">
    <property type="nucleotide sequence ID" value="NC_004829.2"/>
</dbReference>
<dbReference type="SMR" id="Q7NAN2"/>
<dbReference type="KEGG" id="mga:MGA_0407"/>
<dbReference type="HOGENOM" id="CLU_087936_1_1_14"/>
<dbReference type="OrthoDB" id="5293449at2"/>
<dbReference type="Proteomes" id="UP000001418">
    <property type="component" value="Chromosome"/>
</dbReference>
<dbReference type="GO" id="GO:0005737">
    <property type="term" value="C:cytoplasm"/>
    <property type="evidence" value="ECO:0007669"/>
    <property type="project" value="UniProtKB-SubCell"/>
</dbReference>
<dbReference type="GO" id="GO:0009379">
    <property type="term" value="C:Holliday junction helicase complex"/>
    <property type="evidence" value="ECO:0007669"/>
    <property type="project" value="InterPro"/>
</dbReference>
<dbReference type="GO" id="GO:0048476">
    <property type="term" value="C:Holliday junction resolvase complex"/>
    <property type="evidence" value="ECO:0007669"/>
    <property type="project" value="UniProtKB-UniRule"/>
</dbReference>
<dbReference type="GO" id="GO:0005524">
    <property type="term" value="F:ATP binding"/>
    <property type="evidence" value="ECO:0007669"/>
    <property type="project" value="InterPro"/>
</dbReference>
<dbReference type="GO" id="GO:0000400">
    <property type="term" value="F:four-way junction DNA binding"/>
    <property type="evidence" value="ECO:0007669"/>
    <property type="project" value="UniProtKB-UniRule"/>
</dbReference>
<dbReference type="GO" id="GO:0009378">
    <property type="term" value="F:four-way junction helicase activity"/>
    <property type="evidence" value="ECO:0007669"/>
    <property type="project" value="InterPro"/>
</dbReference>
<dbReference type="GO" id="GO:0006310">
    <property type="term" value="P:DNA recombination"/>
    <property type="evidence" value="ECO:0007669"/>
    <property type="project" value="UniProtKB-UniRule"/>
</dbReference>
<dbReference type="GO" id="GO:0006281">
    <property type="term" value="P:DNA repair"/>
    <property type="evidence" value="ECO:0007669"/>
    <property type="project" value="UniProtKB-UniRule"/>
</dbReference>
<dbReference type="CDD" id="cd14332">
    <property type="entry name" value="UBA_RuvA_C"/>
    <property type="match status" value="1"/>
</dbReference>
<dbReference type="Gene3D" id="1.10.150.20">
    <property type="entry name" value="5' to 3' exonuclease, C-terminal subdomain"/>
    <property type="match status" value="1"/>
</dbReference>
<dbReference type="HAMAP" id="MF_00031">
    <property type="entry name" value="DNA_HJ_migration_RuvA"/>
    <property type="match status" value="1"/>
</dbReference>
<dbReference type="InterPro" id="IPR000085">
    <property type="entry name" value="RuvA"/>
</dbReference>
<dbReference type="InterPro" id="IPR010994">
    <property type="entry name" value="RuvA_2-like"/>
</dbReference>
<dbReference type="InterPro" id="IPR011114">
    <property type="entry name" value="RuvA_C"/>
</dbReference>
<dbReference type="NCBIfam" id="TIGR00084">
    <property type="entry name" value="ruvA"/>
    <property type="match status" value="1"/>
</dbReference>
<dbReference type="SUPFAM" id="SSF47781">
    <property type="entry name" value="RuvA domain 2-like"/>
    <property type="match status" value="1"/>
</dbReference>
<name>RUVA_MYCGA</name>
<gene>
    <name evidence="1" type="primary">ruvA</name>
    <name type="ordered locus">MYCGA6040</name>
    <name type="ORF">MGA_0407</name>
</gene>
<accession>Q7NAN2</accession>
<sequence>MITSVYAKIEYVTNTKMLFVANNWGYWVNVKPNSGFSRTDNNVLVFLHELTFLAQNNAINKELYAFKSLKEKEWFKALLTINGIGPKTAMNVMVNKQEEVLTLIKNNDLNGLLRLENINKKVATMLLASDIASKHYLKNQIVVSDKVEPQIDDDEKIDDSKDLNDDELLSEIVIEAIDCLISLGYKQEQIKTALAEIDLKNESINDSADLVAVIIKQIGLRTSEVS</sequence>
<protein>
    <recommendedName>
        <fullName evidence="1">Holliday junction branch migration complex subunit RuvA</fullName>
    </recommendedName>
</protein>
<proteinExistence type="inferred from homology"/>
<evidence type="ECO:0000255" key="1">
    <source>
        <dbReference type="HAMAP-Rule" id="MF_00031"/>
    </source>
</evidence>
<reference key="1">
    <citation type="journal article" date="2003" name="Microbiology">
        <title>The complete genome sequence of the avian pathogen Mycoplasma gallisepticum strain R(low).</title>
        <authorList>
            <person name="Papazisi L."/>
            <person name="Gorton T.S."/>
            <person name="Kutish G."/>
            <person name="Markham P.F."/>
            <person name="Browning G.F."/>
            <person name="Nguyen D.K."/>
            <person name="Swartzell S."/>
            <person name="Madan A."/>
            <person name="Mahairas G."/>
            <person name="Geary S.J."/>
        </authorList>
    </citation>
    <scope>NUCLEOTIDE SEQUENCE [LARGE SCALE GENOMIC DNA]</scope>
    <source>
        <strain>R(low / passage 15 / clone 2)</strain>
    </source>
</reference>
<comment type="function">
    <text evidence="1">The RuvA-RuvB-RuvC complex processes Holliday junction (HJ) DNA during genetic recombination and DNA repair, while the RuvA-RuvB complex plays an important role in the rescue of blocked DNA replication forks via replication fork reversal (RFR). RuvA specifically binds to HJ cruciform DNA, conferring on it an open structure. The RuvB hexamer acts as an ATP-dependent pump, pulling dsDNA into and through the RuvAB complex. HJ branch migration allows RuvC to scan DNA until it finds its consensus sequence, where it cleaves and resolves the cruciform DNA.</text>
</comment>
<comment type="subunit">
    <text evidence="1">Homotetramer. Forms an RuvA(8)-RuvB(12)-Holliday junction (HJ) complex. HJ DNA is sandwiched between 2 RuvA tetramers; dsDNA enters through RuvA and exits via RuvB. An RuvB hexamer assembles on each DNA strand where it exits the tetramer. Each RuvB hexamer is contacted by two RuvA subunits (via domain III) on 2 adjacent RuvB subunits; this complex drives branch migration. In the full resolvosome a probable DNA-RuvA(4)-RuvB(12)-RuvC(2) complex forms which resolves the HJ.</text>
</comment>
<comment type="subcellular location">
    <subcellularLocation>
        <location evidence="1">Cytoplasm</location>
    </subcellularLocation>
</comment>
<comment type="domain">
    <text evidence="1">Has three domains with a flexible linker between the domains II and III and assumes an 'L' shape. Domain III is highly mobile and contacts RuvB.</text>
</comment>
<comment type="similarity">
    <text evidence="1">Belongs to the RuvA family.</text>
</comment>